<organism>
    <name type="scientific">Mycobacterium tuberculosis (strain CDC 1551 / Oshkosh)</name>
    <dbReference type="NCBI Taxonomy" id="83331"/>
    <lineage>
        <taxon>Bacteria</taxon>
        <taxon>Bacillati</taxon>
        <taxon>Actinomycetota</taxon>
        <taxon>Actinomycetes</taxon>
        <taxon>Mycobacteriales</taxon>
        <taxon>Mycobacteriaceae</taxon>
        <taxon>Mycobacterium</taxon>
        <taxon>Mycobacterium tuberculosis complex</taxon>
    </lineage>
</organism>
<feature type="chain" id="PRO_0000427911" description="Antitoxin MT2731">
    <location>
        <begin position="1"/>
        <end position="81"/>
    </location>
</feature>
<comment type="function">
    <text evidence="1">Antitoxin component of a type II toxin-antitoxin (TA) system. Neutralizes the effect of cognate toxin MT2730 (By similarity).</text>
</comment>
<accession>P9WJ10</accession>
<accession>L0TD62</accession>
<accession>P71951</accession>
<accession>Q7D6U0</accession>
<keyword id="KW-1185">Reference proteome</keyword>
<keyword id="KW-1277">Toxin-antitoxin system</keyword>
<gene>
    <name type="ordered locus">MT2731</name>
</gene>
<protein>
    <recommendedName>
        <fullName>Antitoxin MT2731</fullName>
    </recommendedName>
</protein>
<dbReference type="EMBL" id="AE000516">
    <property type="protein sequence ID" value="AAK47045.1"/>
    <property type="molecule type" value="Genomic_DNA"/>
</dbReference>
<dbReference type="PIR" id="B70966">
    <property type="entry name" value="B70966"/>
</dbReference>
<dbReference type="RefSeq" id="WP_003899415.1">
    <property type="nucleotide sequence ID" value="NZ_KK341227.1"/>
</dbReference>
<dbReference type="KEGG" id="mtc:MT2731"/>
<dbReference type="PATRIC" id="fig|83331.31.peg.2941"/>
<dbReference type="HOGENOM" id="CLU_195256_0_0_11"/>
<dbReference type="Proteomes" id="UP000001020">
    <property type="component" value="Chromosome"/>
</dbReference>
<proteinExistence type="inferred from homology"/>
<sequence>MSGHALAARTLLAAADELVGGPPVEASAAALAGDAAGAWRTAAVELARALVRAVAESHGVAAVLFAATAAAAAAVDRGDPP</sequence>
<name>Y2654_MYCTO</name>
<reference key="1">
    <citation type="journal article" date="2002" name="J. Bacteriol.">
        <title>Whole-genome comparison of Mycobacterium tuberculosis clinical and laboratory strains.</title>
        <authorList>
            <person name="Fleischmann R.D."/>
            <person name="Alland D."/>
            <person name="Eisen J.A."/>
            <person name="Carpenter L."/>
            <person name="White O."/>
            <person name="Peterson J.D."/>
            <person name="DeBoy R.T."/>
            <person name="Dodson R.J."/>
            <person name="Gwinn M.L."/>
            <person name="Haft D.H."/>
            <person name="Hickey E.K."/>
            <person name="Kolonay J.F."/>
            <person name="Nelson W.C."/>
            <person name="Umayam L.A."/>
            <person name="Ermolaeva M.D."/>
            <person name="Salzberg S.L."/>
            <person name="Delcher A."/>
            <person name="Utterback T.R."/>
            <person name="Weidman J.F."/>
            <person name="Khouri H.M."/>
            <person name="Gill J."/>
            <person name="Mikula A."/>
            <person name="Bishai W."/>
            <person name="Jacobs W.R. Jr."/>
            <person name="Venter J.C."/>
            <person name="Fraser C.M."/>
        </authorList>
    </citation>
    <scope>NUCLEOTIDE SEQUENCE [LARGE SCALE GENOMIC DNA]</scope>
    <source>
        <strain>CDC 1551 / Oshkosh</strain>
    </source>
</reference>
<evidence type="ECO:0000250" key="1"/>